<name>HSLU_ECTM1</name>
<proteinExistence type="inferred from homology"/>
<protein>
    <recommendedName>
        <fullName evidence="1">ATP-dependent protease ATPase subunit HslU</fullName>
    </recommendedName>
    <alternativeName>
        <fullName evidence="1">Unfoldase HslU</fullName>
    </alternativeName>
</protein>
<gene>
    <name evidence="1" type="primary">hslU</name>
    <name type="ordered locus">Pmen_0532</name>
</gene>
<evidence type="ECO:0000255" key="1">
    <source>
        <dbReference type="HAMAP-Rule" id="MF_00249"/>
    </source>
</evidence>
<sequence length="446" mass="49819">MSMTPREIVHELNRHIIGQDDAKRAVAIALRNRWRRMQLPADLRQEVTPKNILMIGPTGVGKTEIARRLAKLANAPFLKVEATKFTEVGYVGRDVESIIRDLADAAVKMLREQEMTKVRHRAEDAAEERILDALLPPARQAFGDEPVRSEDSNTRQLFRKRLREGQLDDKEIDIEVAESPMGVEIMTPPGMEEMTSQLQNLFAGLGKGKKKSRKLKVADALKLVRDEEAARLVNEEELKARALEAVEQHGIVFIDEIDKVAKRGNTGGADVSREGVQRDLLPLIEGCTVNTKLGMVKTDHILFIASGAFHLAKPSDLVPELQGRLPIRVELKALSPQDFERILTEPHASLTEQYAALLKTEGLNIEFAEEGIKRLAEIAWQVNEKTENIGARRLHTLLERLLEEVSFSAGDLAGQQSGEPIRIDAAYVNGHLGELAQDEDLSRYIL</sequence>
<keyword id="KW-0067">ATP-binding</keyword>
<keyword id="KW-0143">Chaperone</keyword>
<keyword id="KW-0963">Cytoplasm</keyword>
<keyword id="KW-0547">Nucleotide-binding</keyword>
<keyword id="KW-0346">Stress response</keyword>
<organism>
    <name type="scientific">Ectopseudomonas mendocina (strain ymp)</name>
    <name type="common">Pseudomonas mendocina</name>
    <dbReference type="NCBI Taxonomy" id="399739"/>
    <lineage>
        <taxon>Bacteria</taxon>
        <taxon>Pseudomonadati</taxon>
        <taxon>Pseudomonadota</taxon>
        <taxon>Gammaproteobacteria</taxon>
        <taxon>Pseudomonadales</taxon>
        <taxon>Pseudomonadaceae</taxon>
        <taxon>Ectopseudomonas</taxon>
    </lineage>
</organism>
<reference key="1">
    <citation type="submission" date="2007-04" db="EMBL/GenBank/DDBJ databases">
        <title>Complete sequence of Pseudomonas mendocina ymp.</title>
        <authorList>
            <consortium name="US DOE Joint Genome Institute"/>
            <person name="Copeland A."/>
            <person name="Lucas S."/>
            <person name="Lapidus A."/>
            <person name="Barry K."/>
            <person name="Glavina del Rio T."/>
            <person name="Dalin E."/>
            <person name="Tice H."/>
            <person name="Pitluck S."/>
            <person name="Kiss H."/>
            <person name="Brettin T."/>
            <person name="Detter J.C."/>
            <person name="Bruce D."/>
            <person name="Han C."/>
            <person name="Schmutz J."/>
            <person name="Larimer F."/>
            <person name="Land M."/>
            <person name="Hauser L."/>
            <person name="Kyrpides N."/>
            <person name="Mikhailova N."/>
            <person name="Hersman L."/>
            <person name="Dubois J."/>
            <person name="Maurice P."/>
            <person name="Richardson P."/>
        </authorList>
    </citation>
    <scope>NUCLEOTIDE SEQUENCE [LARGE SCALE GENOMIC DNA]</scope>
    <source>
        <strain>ymp</strain>
    </source>
</reference>
<feature type="chain" id="PRO_1000012776" description="ATP-dependent protease ATPase subunit HslU">
    <location>
        <begin position="1"/>
        <end position="446"/>
    </location>
</feature>
<feature type="binding site" evidence="1">
    <location>
        <position position="17"/>
    </location>
    <ligand>
        <name>ATP</name>
        <dbReference type="ChEBI" id="CHEBI:30616"/>
    </ligand>
</feature>
<feature type="binding site" evidence="1">
    <location>
        <begin position="59"/>
        <end position="64"/>
    </location>
    <ligand>
        <name>ATP</name>
        <dbReference type="ChEBI" id="CHEBI:30616"/>
    </ligand>
</feature>
<feature type="binding site" evidence="1">
    <location>
        <position position="255"/>
    </location>
    <ligand>
        <name>ATP</name>
        <dbReference type="ChEBI" id="CHEBI:30616"/>
    </ligand>
</feature>
<feature type="binding site" evidence="1">
    <location>
        <position position="320"/>
    </location>
    <ligand>
        <name>ATP</name>
        <dbReference type="ChEBI" id="CHEBI:30616"/>
    </ligand>
</feature>
<feature type="binding site" evidence="1">
    <location>
        <position position="392"/>
    </location>
    <ligand>
        <name>ATP</name>
        <dbReference type="ChEBI" id="CHEBI:30616"/>
    </ligand>
</feature>
<dbReference type="EMBL" id="CP000680">
    <property type="protein sequence ID" value="ABP83302.1"/>
    <property type="molecule type" value="Genomic_DNA"/>
</dbReference>
<dbReference type="SMR" id="A4XPN6"/>
<dbReference type="STRING" id="399739.Pmen_0532"/>
<dbReference type="KEGG" id="pmy:Pmen_0532"/>
<dbReference type="PATRIC" id="fig|399739.8.peg.540"/>
<dbReference type="eggNOG" id="COG1220">
    <property type="taxonomic scope" value="Bacteria"/>
</dbReference>
<dbReference type="HOGENOM" id="CLU_033123_0_0_6"/>
<dbReference type="OrthoDB" id="9804062at2"/>
<dbReference type="GO" id="GO:0009376">
    <property type="term" value="C:HslUV protease complex"/>
    <property type="evidence" value="ECO:0007669"/>
    <property type="project" value="UniProtKB-UniRule"/>
</dbReference>
<dbReference type="GO" id="GO:0005524">
    <property type="term" value="F:ATP binding"/>
    <property type="evidence" value="ECO:0007669"/>
    <property type="project" value="UniProtKB-UniRule"/>
</dbReference>
<dbReference type="GO" id="GO:0016887">
    <property type="term" value="F:ATP hydrolysis activity"/>
    <property type="evidence" value="ECO:0007669"/>
    <property type="project" value="InterPro"/>
</dbReference>
<dbReference type="GO" id="GO:0008233">
    <property type="term" value="F:peptidase activity"/>
    <property type="evidence" value="ECO:0007669"/>
    <property type="project" value="InterPro"/>
</dbReference>
<dbReference type="GO" id="GO:0036402">
    <property type="term" value="F:proteasome-activating activity"/>
    <property type="evidence" value="ECO:0007669"/>
    <property type="project" value="UniProtKB-UniRule"/>
</dbReference>
<dbReference type="GO" id="GO:0043335">
    <property type="term" value="P:protein unfolding"/>
    <property type="evidence" value="ECO:0007669"/>
    <property type="project" value="UniProtKB-UniRule"/>
</dbReference>
<dbReference type="GO" id="GO:0051603">
    <property type="term" value="P:proteolysis involved in protein catabolic process"/>
    <property type="evidence" value="ECO:0007669"/>
    <property type="project" value="TreeGrafter"/>
</dbReference>
<dbReference type="CDD" id="cd19498">
    <property type="entry name" value="RecA-like_HslU"/>
    <property type="match status" value="1"/>
</dbReference>
<dbReference type="FunFam" id="1.10.8.10:FF:000028">
    <property type="entry name" value="ATP-dependent protease ATPase subunit HslU"/>
    <property type="match status" value="1"/>
</dbReference>
<dbReference type="FunFam" id="3.40.50.300:FF:000213">
    <property type="entry name" value="ATP-dependent protease ATPase subunit HslU"/>
    <property type="match status" value="1"/>
</dbReference>
<dbReference type="FunFam" id="3.40.50.300:FF:000220">
    <property type="entry name" value="ATP-dependent protease ATPase subunit HslU"/>
    <property type="match status" value="1"/>
</dbReference>
<dbReference type="Gene3D" id="1.10.8.60">
    <property type="match status" value="1"/>
</dbReference>
<dbReference type="Gene3D" id="3.40.50.300">
    <property type="entry name" value="P-loop containing nucleotide triphosphate hydrolases"/>
    <property type="match status" value="2"/>
</dbReference>
<dbReference type="HAMAP" id="MF_00249">
    <property type="entry name" value="HslU"/>
    <property type="match status" value="1"/>
</dbReference>
<dbReference type="InterPro" id="IPR003593">
    <property type="entry name" value="AAA+_ATPase"/>
</dbReference>
<dbReference type="InterPro" id="IPR050052">
    <property type="entry name" value="ATP-dep_Clp_protease_ClpX"/>
</dbReference>
<dbReference type="InterPro" id="IPR003959">
    <property type="entry name" value="ATPase_AAA_core"/>
</dbReference>
<dbReference type="InterPro" id="IPR019489">
    <property type="entry name" value="Clp_ATPase_C"/>
</dbReference>
<dbReference type="InterPro" id="IPR004491">
    <property type="entry name" value="HslU"/>
</dbReference>
<dbReference type="InterPro" id="IPR027417">
    <property type="entry name" value="P-loop_NTPase"/>
</dbReference>
<dbReference type="NCBIfam" id="TIGR00390">
    <property type="entry name" value="hslU"/>
    <property type="match status" value="1"/>
</dbReference>
<dbReference type="NCBIfam" id="NF003544">
    <property type="entry name" value="PRK05201.1"/>
    <property type="match status" value="1"/>
</dbReference>
<dbReference type="PANTHER" id="PTHR48102">
    <property type="entry name" value="ATP-DEPENDENT CLP PROTEASE ATP-BINDING SUBUNIT CLPX-LIKE, MITOCHONDRIAL-RELATED"/>
    <property type="match status" value="1"/>
</dbReference>
<dbReference type="PANTHER" id="PTHR48102:SF3">
    <property type="entry name" value="ATP-DEPENDENT PROTEASE ATPASE SUBUNIT HSLU"/>
    <property type="match status" value="1"/>
</dbReference>
<dbReference type="Pfam" id="PF00004">
    <property type="entry name" value="AAA"/>
    <property type="match status" value="1"/>
</dbReference>
<dbReference type="Pfam" id="PF07724">
    <property type="entry name" value="AAA_2"/>
    <property type="match status" value="1"/>
</dbReference>
<dbReference type="SMART" id="SM00382">
    <property type="entry name" value="AAA"/>
    <property type="match status" value="1"/>
</dbReference>
<dbReference type="SMART" id="SM01086">
    <property type="entry name" value="ClpB_D2-small"/>
    <property type="match status" value="1"/>
</dbReference>
<dbReference type="SUPFAM" id="SSF52540">
    <property type="entry name" value="P-loop containing nucleoside triphosphate hydrolases"/>
    <property type="match status" value="1"/>
</dbReference>
<accession>A4XPN6</accession>
<comment type="function">
    <text evidence="1">ATPase subunit of a proteasome-like degradation complex; this subunit has chaperone activity. The binding of ATP and its subsequent hydrolysis by HslU are essential for unfolding of protein substrates subsequently hydrolyzed by HslV. HslU recognizes the N-terminal part of its protein substrates and unfolds these before they are guided to HslV for hydrolysis.</text>
</comment>
<comment type="subunit">
    <text evidence="1">A double ring-shaped homohexamer of HslV is capped on each side by a ring-shaped HslU homohexamer. The assembly of the HslU/HslV complex is dependent on binding of ATP.</text>
</comment>
<comment type="subcellular location">
    <subcellularLocation>
        <location evidence="1">Cytoplasm</location>
    </subcellularLocation>
</comment>
<comment type="similarity">
    <text evidence="1">Belongs to the ClpX chaperone family. HslU subfamily.</text>
</comment>